<name>COF1A_XENLA</name>
<organism>
    <name type="scientific">Xenopus laevis</name>
    <name type="common">African clawed frog</name>
    <dbReference type="NCBI Taxonomy" id="8355"/>
    <lineage>
        <taxon>Eukaryota</taxon>
        <taxon>Metazoa</taxon>
        <taxon>Chordata</taxon>
        <taxon>Craniata</taxon>
        <taxon>Vertebrata</taxon>
        <taxon>Euteleostomi</taxon>
        <taxon>Amphibia</taxon>
        <taxon>Batrachia</taxon>
        <taxon>Anura</taxon>
        <taxon>Pipoidea</taxon>
        <taxon>Pipidae</taxon>
        <taxon>Xenopodinae</taxon>
        <taxon>Xenopus</taxon>
        <taxon>Xenopus</taxon>
    </lineage>
</organism>
<reference key="1">
    <citation type="journal article" date="1996" name="J. Cell Biol.">
        <title>Xenopus laevis actin-depolymerizing factor/cofilin: a phosphorylation-regulated protein essential for development.</title>
        <authorList>
            <person name="Abe H."/>
            <person name="Obinata T."/>
            <person name="Minamide L.S."/>
            <person name="Bamburg J.R."/>
        </authorList>
    </citation>
    <scope>NUCLEOTIDE SEQUENCE [MRNA]</scope>
    <scope>FUNCTION</scope>
    <scope>SUBCELLULAR LOCATION</scope>
    <scope>TISSUE SPECIFICITY</scope>
    <scope>DEVELOPMENTAL STAGE</scope>
    <scope>PHOSPHORYLATION</scope>
    <source>
        <tissue>Tail bud</tissue>
    </source>
</reference>
<reference key="2">
    <citation type="submission" date="2003-01" db="EMBL/GenBank/DDBJ databases">
        <authorList>
            <consortium name="NIH - Xenopus Gene Collection (XGC) project"/>
        </authorList>
    </citation>
    <scope>NUCLEOTIDE SEQUENCE [LARGE SCALE MRNA]</scope>
    <source>
        <tissue>Tail bud</tissue>
    </source>
</reference>
<reference key="3">
    <citation type="journal article" date="2005" name="Nat. Cell Biol.">
        <title>Chronophin, a novel HAD-type serine protein phosphatase, regulates cofilin-dependent actin dynamics.</title>
        <authorList>
            <person name="Gohla A."/>
            <person name="Birkenfeld J."/>
            <person name="Bokoch G.M."/>
        </authorList>
    </citation>
    <scope>DEPHOSPHORYLATION BY PDXP</scope>
</reference>
<dbReference type="EMBL" id="U26270">
    <property type="protein sequence ID" value="AAB00540.1"/>
    <property type="molecule type" value="mRNA"/>
</dbReference>
<dbReference type="EMBL" id="BC044691">
    <property type="protein sequence ID" value="AAH44691.1"/>
    <property type="molecule type" value="mRNA"/>
</dbReference>
<dbReference type="RefSeq" id="NP_001079571.1">
    <property type="nucleotide sequence ID" value="NM_001086102.1"/>
</dbReference>
<dbReference type="SMR" id="P45695"/>
<dbReference type="BioGRID" id="97501">
    <property type="interactions" value="1"/>
</dbReference>
<dbReference type="IntAct" id="P45695">
    <property type="interactions" value="1"/>
</dbReference>
<dbReference type="iPTMnet" id="P45695"/>
<dbReference type="DNASU" id="379258"/>
<dbReference type="AGR" id="Xenbase:XB-GENE-1016488"/>
<dbReference type="Xenbase" id="XB-GENE-1016488">
    <property type="gene designation" value="cfl1.L"/>
</dbReference>
<dbReference type="Proteomes" id="UP000186698">
    <property type="component" value="Unplaced"/>
</dbReference>
<dbReference type="Bgee" id="379258">
    <property type="expression patterns" value="Expressed in brain and 19 other cell types or tissues"/>
</dbReference>
<dbReference type="GO" id="GO:0015629">
    <property type="term" value="C:actin cytoskeleton"/>
    <property type="evidence" value="ECO:0000318"/>
    <property type="project" value="GO_Central"/>
</dbReference>
<dbReference type="GO" id="GO:0005938">
    <property type="term" value="C:cell cortex"/>
    <property type="evidence" value="ECO:0000314"/>
    <property type="project" value="UniProtKB"/>
</dbReference>
<dbReference type="GO" id="GO:0005737">
    <property type="term" value="C:cytoplasm"/>
    <property type="evidence" value="ECO:0000314"/>
    <property type="project" value="UniProtKB"/>
</dbReference>
<dbReference type="GO" id="GO:0016020">
    <property type="term" value="C:membrane"/>
    <property type="evidence" value="ECO:0000314"/>
    <property type="project" value="UniProtKB"/>
</dbReference>
<dbReference type="GO" id="GO:0030496">
    <property type="term" value="C:midbody"/>
    <property type="evidence" value="ECO:0000314"/>
    <property type="project" value="UniProtKB"/>
</dbReference>
<dbReference type="GO" id="GO:0016363">
    <property type="term" value="C:nuclear matrix"/>
    <property type="evidence" value="ECO:0007669"/>
    <property type="project" value="UniProtKB-SubCell"/>
</dbReference>
<dbReference type="GO" id="GO:0051015">
    <property type="term" value="F:actin filament binding"/>
    <property type="evidence" value="ECO:0000314"/>
    <property type="project" value="UniProtKB"/>
</dbReference>
<dbReference type="GO" id="GO:0030042">
    <property type="term" value="P:actin filament depolymerization"/>
    <property type="evidence" value="ECO:0000314"/>
    <property type="project" value="UniProtKB"/>
</dbReference>
<dbReference type="GO" id="GO:0030043">
    <property type="term" value="P:actin filament fragmentation"/>
    <property type="evidence" value="ECO:0000318"/>
    <property type="project" value="GO_Central"/>
</dbReference>
<dbReference type="GO" id="GO:0051014">
    <property type="term" value="P:actin filament severing"/>
    <property type="evidence" value="ECO:0000318"/>
    <property type="project" value="GO_Central"/>
</dbReference>
<dbReference type="GO" id="GO:0007010">
    <property type="term" value="P:cytoskeleton organization"/>
    <property type="evidence" value="ECO:0000250"/>
    <property type="project" value="UniProtKB"/>
</dbReference>
<dbReference type="GO" id="GO:0061640">
    <property type="term" value="P:cytoskeleton-dependent cytokinesis"/>
    <property type="evidence" value="ECO:0000315"/>
    <property type="project" value="UniProtKB"/>
</dbReference>
<dbReference type="GO" id="GO:0022604">
    <property type="term" value="P:regulation of cell morphogenesis"/>
    <property type="evidence" value="ECO:0000250"/>
    <property type="project" value="UniProtKB"/>
</dbReference>
<dbReference type="CDD" id="cd11286">
    <property type="entry name" value="ADF_cofilin_like"/>
    <property type="match status" value="1"/>
</dbReference>
<dbReference type="FunFam" id="3.40.20.10:FF:000010">
    <property type="entry name" value="Putative destrin"/>
    <property type="match status" value="1"/>
</dbReference>
<dbReference type="Gene3D" id="3.40.20.10">
    <property type="entry name" value="Severin"/>
    <property type="match status" value="1"/>
</dbReference>
<dbReference type="InterPro" id="IPR002108">
    <property type="entry name" value="ADF-H"/>
</dbReference>
<dbReference type="InterPro" id="IPR029006">
    <property type="entry name" value="ADF-H/Gelsolin-like_dom_sf"/>
</dbReference>
<dbReference type="InterPro" id="IPR017904">
    <property type="entry name" value="ADF/Cofilin"/>
</dbReference>
<dbReference type="PANTHER" id="PTHR11913">
    <property type="entry name" value="COFILIN-RELATED"/>
    <property type="match status" value="1"/>
</dbReference>
<dbReference type="Pfam" id="PF00241">
    <property type="entry name" value="Cofilin_ADF"/>
    <property type="match status" value="1"/>
</dbReference>
<dbReference type="PRINTS" id="PR00006">
    <property type="entry name" value="COFILIN"/>
</dbReference>
<dbReference type="SMART" id="SM00102">
    <property type="entry name" value="ADF"/>
    <property type="match status" value="1"/>
</dbReference>
<dbReference type="SUPFAM" id="SSF55753">
    <property type="entry name" value="Actin depolymerizing proteins"/>
    <property type="match status" value="1"/>
</dbReference>
<dbReference type="PROSITE" id="PS51263">
    <property type="entry name" value="ADF_H"/>
    <property type="match status" value="1"/>
</dbReference>
<gene>
    <name type="primary">cfl1-a</name>
</gene>
<feature type="initiator methionine" description="Removed" evidence="1">
    <location>
        <position position="1"/>
    </location>
</feature>
<feature type="chain" id="PRO_0000214904" description="Cofilin-1-A">
    <location>
        <begin position="2"/>
        <end position="168"/>
    </location>
</feature>
<feature type="domain" description="ADF-H" evidence="3">
    <location>
        <begin position="4"/>
        <end position="153"/>
    </location>
</feature>
<feature type="short sequence motif" description="Nuclear localization signal" evidence="2">
    <location>
        <begin position="30"/>
        <end position="34"/>
    </location>
</feature>
<feature type="modified residue" description="N-acetylalanine" evidence="1">
    <location>
        <position position="2"/>
    </location>
</feature>
<protein>
    <recommendedName>
        <fullName>Cofilin-1-A</fullName>
    </recommendedName>
    <alternativeName>
        <fullName>ADF/cofilin-1</fullName>
        <shortName>XAC1</shortName>
    </alternativeName>
</protein>
<proteinExistence type="evidence at protein level"/>
<accession>P45695</accession>
<accession>Q5D0B5</accession>
<sequence>MASGVMVSDDVIKVFNEMKVRHQLSPEDAKKRKKAVVFCLSDDKKTIILEPGKEILQGDIGCNVEDPYKTFVKMLPRNDCRYALYDALYETKETKKEDLVFVFWAPEEASLKSKMIYASSKDAIKKRLPGIKHEWQINTYEDVNDPCNLADKLGGNTVVSLEGKSVRS</sequence>
<evidence type="ECO:0000250" key="1"/>
<evidence type="ECO:0000255" key="2"/>
<evidence type="ECO:0000255" key="3">
    <source>
        <dbReference type="PROSITE-ProRule" id="PRU00599"/>
    </source>
</evidence>
<evidence type="ECO:0000269" key="4">
    <source>
    </source>
</evidence>
<evidence type="ECO:0000305" key="5"/>
<comment type="function">
    <text evidence="1 4">May play a role in the regulation of cell morphology and cytoskeletal organization (By similarity). Binds to F-actin and exhibits pH-sensitive F-actin depolymerizing activity. Required for formation of the cleavage furrow during cytokinesis.</text>
</comment>
<comment type="subcellular location">
    <subcellularLocation>
        <location evidence="1">Nucleus matrix</location>
    </subcellularLocation>
    <subcellularLocation>
        <location evidence="1">Cytoplasm</location>
        <location evidence="1">Cytoskeleton</location>
    </subcellularLocation>
    <subcellularLocation>
        <location evidence="4">Cytoplasm</location>
        <location evidence="4">Cell cortex</location>
    </subcellularLocation>
    <subcellularLocation>
        <location evidence="4">Membrane</location>
    </subcellularLocation>
    <text>Cellular localization varies throughout development and may be related to phosphorylation levels. Shows diffuse cortical cytoplasm localization in oocytes, with membrane-association increasing after fertilization, particularly in the vegetal hemisphere.</text>
</comment>
<comment type="tissue specificity">
    <text evidence="4">Expressed diffusely in both animal and vegetal hemispheres of the oocyte. During cleavage, expression accumulates around the cleavage furrow, along the vegetal membrane, and later in the midbody. Strongly expressed in the animal hemisphere during blastula stages, with most cells showing expression by gastrulation. By stage 17, expression is highest in cells of the developing neuroectoderm, and at stage 24 the notochord, neural tube, neural crest, somites and some cells of the archenteron show high expression. By stage 35, expression has declined in the notochord, but remains in the neural tube, epidermis and a layer of cells in the archenteron. Also highly expressed in the retina and neuronal cell bodies at the base of the cement gland but not the cement gland itself. At stage 38, expression is widespread, being highest in the nervous system and retina. In the adult, expression is high in the brain, heart, oocyte, stomach, and low in skeletal muscle.</text>
</comment>
<comment type="developmental stage">
    <text evidence="4">Expressed both maternally and zygotically. Maternal expression is gradually replaced with zygotic expression between the morula (stage 5) and tadpole (stage 34) stages.</text>
</comment>
<comment type="PTM">
    <text evidence="4">Inactive when phosphorylated. Phosphorylation levels vary during development. Oocytes contain only the phosphorylated form, and 80-95% of cfl1 protein is phosphorylated in unfertilized eggs. Rapid dephosphorylation occurs within 30 minutes after fertilization. Phosphorylation levels increase again between the morula and blastula stages (5-8 hpf) and then decrease again as gastrulation approaches. Dephosphorylated by pdxp.</text>
</comment>
<comment type="similarity">
    <text evidence="5">Belongs to the actin-binding proteins ADF family.</text>
</comment>
<keyword id="KW-0007">Acetylation</keyword>
<keyword id="KW-0009">Actin-binding</keyword>
<keyword id="KW-0963">Cytoplasm</keyword>
<keyword id="KW-0206">Cytoskeleton</keyword>
<keyword id="KW-0472">Membrane</keyword>
<keyword id="KW-0539">Nucleus</keyword>
<keyword id="KW-0597">Phosphoprotein</keyword>
<keyword id="KW-1185">Reference proteome</keyword>